<proteinExistence type="inferred from homology"/>
<dbReference type="EMBL" id="CT573326">
    <property type="protein sequence ID" value="CAK13459.1"/>
    <property type="molecule type" value="Genomic_DNA"/>
</dbReference>
<dbReference type="RefSeq" id="WP_003255454.1">
    <property type="nucleotide sequence ID" value="NC_008027.1"/>
</dbReference>
<dbReference type="SMR" id="Q1IFU3"/>
<dbReference type="STRING" id="384676.PSEEN0512"/>
<dbReference type="GeneID" id="97166002"/>
<dbReference type="KEGG" id="pen:PSEEN0512"/>
<dbReference type="eggNOG" id="COG0100">
    <property type="taxonomic scope" value="Bacteria"/>
</dbReference>
<dbReference type="HOGENOM" id="CLU_072439_5_0_6"/>
<dbReference type="OrthoDB" id="9806415at2"/>
<dbReference type="Proteomes" id="UP000000658">
    <property type="component" value="Chromosome"/>
</dbReference>
<dbReference type="GO" id="GO:1990904">
    <property type="term" value="C:ribonucleoprotein complex"/>
    <property type="evidence" value="ECO:0007669"/>
    <property type="project" value="UniProtKB-KW"/>
</dbReference>
<dbReference type="GO" id="GO:0005840">
    <property type="term" value="C:ribosome"/>
    <property type="evidence" value="ECO:0007669"/>
    <property type="project" value="UniProtKB-KW"/>
</dbReference>
<dbReference type="GO" id="GO:0019843">
    <property type="term" value="F:rRNA binding"/>
    <property type="evidence" value="ECO:0007669"/>
    <property type="project" value="UniProtKB-UniRule"/>
</dbReference>
<dbReference type="GO" id="GO:0003735">
    <property type="term" value="F:structural constituent of ribosome"/>
    <property type="evidence" value="ECO:0007669"/>
    <property type="project" value="InterPro"/>
</dbReference>
<dbReference type="GO" id="GO:0006412">
    <property type="term" value="P:translation"/>
    <property type="evidence" value="ECO:0007669"/>
    <property type="project" value="UniProtKB-UniRule"/>
</dbReference>
<dbReference type="FunFam" id="3.30.420.80:FF:000001">
    <property type="entry name" value="30S ribosomal protein S11"/>
    <property type="match status" value="1"/>
</dbReference>
<dbReference type="Gene3D" id="3.30.420.80">
    <property type="entry name" value="Ribosomal protein S11"/>
    <property type="match status" value="1"/>
</dbReference>
<dbReference type="HAMAP" id="MF_01310">
    <property type="entry name" value="Ribosomal_uS11"/>
    <property type="match status" value="1"/>
</dbReference>
<dbReference type="InterPro" id="IPR001971">
    <property type="entry name" value="Ribosomal_uS11"/>
</dbReference>
<dbReference type="InterPro" id="IPR019981">
    <property type="entry name" value="Ribosomal_uS11_bac-type"/>
</dbReference>
<dbReference type="InterPro" id="IPR018102">
    <property type="entry name" value="Ribosomal_uS11_CS"/>
</dbReference>
<dbReference type="InterPro" id="IPR036967">
    <property type="entry name" value="Ribosomal_uS11_sf"/>
</dbReference>
<dbReference type="NCBIfam" id="NF003698">
    <property type="entry name" value="PRK05309.1"/>
    <property type="match status" value="1"/>
</dbReference>
<dbReference type="NCBIfam" id="TIGR03632">
    <property type="entry name" value="uS11_bact"/>
    <property type="match status" value="1"/>
</dbReference>
<dbReference type="PANTHER" id="PTHR11759">
    <property type="entry name" value="40S RIBOSOMAL PROTEIN S14/30S RIBOSOMAL PROTEIN S11"/>
    <property type="match status" value="1"/>
</dbReference>
<dbReference type="Pfam" id="PF00411">
    <property type="entry name" value="Ribosomal_S11"/>
    <property type="match status" value="1"/>
</dbReference>
<dbReference type="PIRSF" id="PIRSF002131">
    <property type="entry name" value="Ribosomal_S11"/>
    <property type="match status" value="1"/>
</dbReference>
<dbReference type="SUPFAM" id="SSF53137">
    <property type="entry name" value="Translational machinery components"/>
    <property type="match status" value="1"/>
</dbReference>
<dbReference type="PROSITE" id="PS00054">
    <property type="entry name" value="RIBOSOMAL_S11"/>
    <property type="match status" value="1"/>
</dbReference>
<sequence>MAKPAARPRKKVKKTVVDGIAHIHASFNNTIVTITDRQGNALSWATSGGSGFRGSRKSTPFAAQIAAERAGQAALEYGLKNLDVNVKGPGPGRESAVRALNSCGYKIASITDVTPIPHNGCRPPKKRRV</sequence>
<evidence type="ECO:0000255" key="1">
    <source>
        <dbReference type="HAMAP-Rule" id="MF_01310"/>
    </source>
</evidence>
<evidence type="ECO:0000305" key="2"/>
<comment type="function">
    <text evidence="1">Located on the platform of the 30S subunit, it bridges several disparate RNA helices of the 16S rRNA. Forms part of the Shine-Dalgarno cleft in the 70S ribosome.</text>
</comment>
<comment type="subunit">
    <text evidence="1">Part of the 30S ribosomal subunit. Interacts with proteins S7 and S18. Binds to IF-3.</text>
</comment>
<comment type="similarity">
    <text evidence="1">Belongs to the universal ribosomal protein uS11 family.</text>
</comment>
<keyword id="KW-0687">Ribonucleoprotein</keyword>
<keyword id="KW-0689">Ribosomal protein</keyword>
<keyword id="KW-0694">RNA-binding</keyword>
<keyword id="KW-0699">rRNA-binding</keyword>
<protein>
    <recommendedName>
        <fullName evidence="1">Small ribosomal subunit protein uS11</fullName>
    </recommendedName>
    <alternativeName>
        <fullName evidence="2">30S ribosomal protein S11</fullName>
    </alternativeName>
</protein>
<feature type="chain" id="PRO_0000294827" description="Small ribosomal subunit protein uS11">
    <location>
        <begin position="1"/>
        <end position="129"/>
    </location>
</feature>
<gene>
    <name evidence="1" type="primary">rpsK</name>
    <name type="ordered locus">PSEEN0512</name>
</gene>
<accession>Q1IFU3</accession>
<organism>
    <name type="scientific">Pseudomonas entomophila (strain L48)</name>
    <dbReference type="NCBI Taxonomy" id="384676"/>
    <lineage>
        <taxon>Bacteria</taxon>
        <taxon>Pseudomonadati</taxon>
        <taxon>Pseudomonadota</taxon>
        <taxon>Gammaproteobacteria</taxon>
        <taxon>Pseudomonadales</taxon>
        <taxon>Pseudomonadaceae</taxon>
        <taxon>Pseudomonas</taxon>
    </lineage>
</organism>
<reference key="1">
    <citation type="journal article" date="2006" name="Nat. Biotechnol.">
        <title>Complete genome sequence of the entomopathogenic and metabolically versatile soil bacterium Pseudomonas entomophila.</title>
        <authorList>
            <person name="Vodovar N."/>
            <person name="Vallenet D."/>
            <person name="Cruveiller S."/>
            <person name="Rouy Z."/>
            <person name="Barbe V."/>
            <person name="Acosta C."/>
            <person name="Cattolico L."/>
            <person name="Jubin C."/>
            <person name="Lajus A."/>
            <person name="Segurens B."/>
            <person name="Vacherie B."/>
            <person name="Wincker P."/>
            <person name="Weissenbach J."/>
            <person name="Lemaitre B."/>
            <person name="Medigue C."/>
            <person name="Boccard F."/>
        </authorList>
    </citation>
    <scope>NUCLEOTIDE SEQUENCE [LARGE SCALE GENOMIC DNA]</scope>
    <source>
        <strain>L48</strain>
    </source>
</reference>
<name>RS11_PSEE4</name>